<organism>
    <name type="scientific">Xenopus tropicalis</name>
    <name type="common">Western clawed frog</name>
    <name type="synonym">Silurana tropicalis</name>
    <dbReference type="NCBI Taxonomy" id="8364"/>
    <lineage>
        <taxon>Eukaryota</taxon>
        <taxon>Metazoa</taxon>
        <taxon>Chordata</taxon>
        <taxon>Craniata</taxon>
        <taxon>Vertebrata</taxon>
        <taxon>Euteleostomi</taxon>
        <taxon>Amphibia</taxon>
        <taxon>Batrachia</taxon>
        <taxon>Anura</taxon>
        <taxon>Pipoidea</taxon>
        <taxon>Pipidae</taxon>
        <taxon>Xenopodinae</taxon>
        <taxon>Xenopus</taxon>
        <taxon>Silurana</taxon>
    </lineage>
</organism>
<keyword id="KW-0963">Cytoplasm</keyword>
<keyword id="KW-0479">Metal-binding</keyword>
<keyword id="KW-0539">Nucleus</keyword>
<keyword id="KW-1185">Reference proteome</keyword>
<keyword id="KW-0808">Transferase</keyword>
<keyword id="KW-0833">Ubl conjugation pathway</keyword>
<keyword id="KW-0862">Zinc</keyword>
<keyword id="KW-0863">Zinc-finger</keyword>
<protein>
    <recommendedName>
        <fullName evidence="5">E3 ubiquitin-protein ligase RNF126</fullName>
        <ecNumber evidence="2">2.3.2.27</ecNumber>
    </recommendedName>
    <alternativeName>
        <fullName evidence="5">RING finger protein 126</fullName>
    </alternativeName>
</protein>
<sequence length="311" mass="33890">MAEALPEAGRYFCHSCTAEIIPRLPEYTCPRCDSGFIEELPETRNSENNSSNNSGTDQNRPSFENLESAQFTLPSGYGQVTFGIFNEGLDFPIFGTSGPVEEPRDGESRREHQSRQRYGARQPRARLSTRRAAGRNEGVPTLEGIIQQLVNGIIAPTAMSNLGVGPWGVLHSNPMDYAWGANGLDTIITQLLNQFENTGPPPADTEKIQALPTIQITEEHVGSGLECPVCKEDYTVGESVRQLPCNHLFHNDCIIPWLEQHDTCPVCRKSLSGQNTATNPPGLTEMTFSSSSTSSSSSTSPTDENNAANNS</sequence>
<proteinExistence type="evidence at transcript level"/>
<name>RN126_XENTR</name>
<dbReference type="EC" id="2.3.2.27" evidence="2"/>
<dbReference type="EMBL" id="BC075492">
    <property type="protein sequence ID" value="AAH75492.1"/>
    <property type="molecule type" value="mRNA"/>
</dbReference>
<dbReference type="RefSeq" id="NP_001006735.1">
    <property type="nucleotide sequence ID" value="NM_001006734.1"/>
</dbReference>
<dbReference type="SMR" id="Q6DIP3"/>
<dbReference type="FunCoup" id="Q6DIP3">
    <property type="interactions" value="2708"/>
</dbReference>
<dbReference type="STRING" id="8364.ENSXETP00000032349"/>
<dbReference type="DNASU" id="448402"/>
<dbReference type="GeneID" id="448402"/>
<dbReference type="KEGG" id="xtr:448402"/>
<dbReference type="AGR" id="Xenbase:XB-GENE-5960892"/>
<dbReference type="CTD" id="55658"/>
<dbReference type="Xenbase" id="XB-GENE-5960892">
    <property type="gene designation" value="rnf126"/>
</dbReference>
<dbReference type="InParanoid" id="Q6DIP3"/>
<dbReference type="OMA" id="DERSADN"/>
<dbReference type="OrthoDB" id="8062037at2759"/>
<dbReference type="Reactome" id="R-XTR-983168">
    <property type="pathway name" value="Antigen processing: Ubiquitination &amp; Proteasome degradation"/>
</dbReference>
<dbReference type="UniPathway" id="UPA00143"/>
<dbReference type="Proteomes" id="UP000008143">
    <property type="component" value="Chromosome 1"/>
</dbReference>
<dbReference type="GO" id="GO:0005737">
    <property type="term" value="C:cytoplasm"/>
    <property type="evidence" value="ECO:0000250"/>
    <property type="project" value="UniProtKB"/>
</dbReference>
<dbReference type="GO" id="GO:0005634">
    <property type="term" value="C:nucleus"/>
    <property type="evidence" value="ECO:0000250"/>
    <property type="project" value="UniProtKB"/>
</dbReference>
<dbReference type="GO" id="GO:0061630">
    <property type="term" value="F:ubiquitin protein ligase activity"/>
    <property type="evidence" value="ECO:0000250"/>
    <property type="project" value="UniProtKB"/>
</dbReference>
<dbReference type="GO" id="GO:0008270">
    <property type="term" value="F:zinc ion binding"/>
    <property type="evidence" value="ECO:0007669"/>
    <property type="project" value="UniProtKB-KW"/>
</dbReference>
<dbReference type="GO" id="GO:1905168">
    <property type="term" value="P:positive regulation of double-strand break repair via homologous recombination"/>
    <property type="evidence" value="ECO:0000250"/>
    <property type="project" value="UniProtKB"/>
</dbReference>
<dbReference type="GO" id="GO:0044314">
    <property type="term" value="P:protein K27-linked ubiquitination"/>
    <property type="evidence" value="ECO:0000250"/>
    <property type="project" value="UniProtKB"/>
</dbReference>
<dbReference type="GO" id="GO:0035519">
    <property type="term" value="P:protein K29-linked ubiquitination"/>
    <property type="evidence" value="ECO:0000250"/>
    <property type="project" value="UniProtKB"/>
</dbReference>
<dbReference type="GO" id="GO:0006511">
    <property type="term" value="P:ubiquitin-dependent protein catabolic process"/>
    <property type="evidence" value="ECO:0000250"/>
    <property type="project" value="UniProtKB"/>
</dbReference>
<dbReference type="CDD" id="cd16801">
    <property type="entry name" value="RING-H2_RNF126"/>
    <property type="match status" value="1"/>
</dbReference>
<dbReference type="FunFam" id="3.30.40.10:FF:000069">
    <property type="entry name" value="E3 ubiquitin-protein ligase RNF115"/>
    <property type="match status" value="1"/>
</dbReference>
<dbReference type="Gene3D" id="3.30.40.10">
    <property type="entry name" value="Zinc/RING finger domain, C3HC4 (zinc finger)"/>
    <property type="match status" value="1"/>
</dbReference>
<dbReference type="InterPro" id="IPR039525">
    <property type="entry name" value="RNF126-like_zinc-ribbon"/>
</dbReference>
<dbReference type="InterPro" id="IPR039571">
    <property type="entry name" value="RNF126_RING-H2"/>
</dbReference>
<dbReference type="InterPro" id="IPR001841">
    <property type="entry name" value="Znf_RING"/>
</dbReference>
<dbReference type="InterPro" id="IPR013083">
    <property type="entry name" value="Znf_RING/FYVE/PHD"/>
</dbReference>
<dbReference type="PANTHER" id="PTHR15710">
    <property type="entry name" value="E3 UBIQUITIN-PROTEIN LIGASE PRAJA"/>
    <property type="match status" value="1"/>
</dbReference>
<dbReference type="PANTHER" id="PTHR15710:SF21">
    <property type="entry name" value="E3 UBIQUITIN-PROTEIN LIGASE RNF126"/>
    <property type="match status" value="1"/>
</dbReference>
<dbReference type="Pfam" id="PF13639">
    <property type="entry name" value="zf-RING_2"/>
    <property type="match status" value="1"/>
</dbReference>
<dbReference type="Pfam" id="PF14369">
    <property type="entry name" value="Zn_ribbon_19"/>
    <property type="match status" value="1"/>
</dbReference>
<dbReference type="SMART" id="SM00184">
    <property type="entry name" value="RING"/>
    <property type="match status" value="1"/>
</dbReference>
<dbReference type="SUPFAM" id="SSF57850">
    <property type="entry name" value="RING/U-box"/>
    <property type="match status" value="1"/>
</dbReference>
<dbReference type="PROSITE" id="PS50089">
    <property type="entry name" value="ZF_RING_2"/>
    <property type="match status" value="1"/>
</dbReference>
<reference key="1">
    <citation type="submission" date="2004-06" db="EMBL/GenBank/DDBJ databases">
        <authorList>
            <consortium name="NIH - Xenopus Gene Collection (XGC) project"/>
        </authorList>
    </citation>
    <scope>NUCLEOTIDE SEQUENCE [LARGE SCALE MRNA]</scope>
    <source>
        <tissue>Embryo</tissue>
    </source>
</reference>
<gene>
    <name evidence="5" type="primary">rnf126</name>
</gene>
<feature type="chain" id="PRO_0000056097" description="E3 ubiquitin-protein ligase RNF126">
    <location>
        <begin position="1"/>
        <end position="311"/>
    </location>
</feature>
<feature type="zinc finger region" description="C4-type" evidence="2">
    <location>
        <begin position="13"/>
        <end position="32"/>
    </location>
</feature>
<feature type="zinc finger region" description="RING-type" evidence="3">
    <location>
        <begin position="227"/>
        <end position="268"/>
    </location>
</feature>
<feature type="region of interest" description="Disordered" evidence="4">
    <location>
        <begin position="42"/>
        <end position="62"/>
    </location>
</feature>
<feature type="region of interest" description="Disordered" evidence="4">
    <location>
        <begin position="95"/>
        <end position="133"/>
    </location>
</feature>
<feature type="region of interest" description="Disordered" evidence="4">
    <location>
        <begin position="274"/>
        <end position="311"/>
    </location>
</feature>
<feature type="compositionally biased region" description="Basic and acidic residues" evidence="4">
    <location>
        <begin position="101"/>
        <end position="114"/>
    </location>
</feature>
<feature type="compositionally biased region" description="Basic residues" evidence="4">
    <location>
        <begin position="123"/>
        <end position="133"/>
    </location>
</feature>
<feature type="compositionally biased region" description="Low complexity" evidence="4">
    <location>
        <begin position="289"/>
        <end position="300"/>
    </location>
</feature>
<feature type="compositionally biased region" description="Polar residues" evidence="4">
    <location>
        <begin position="301"/>
        <end position="311"/>
    </location>
</feature>
<feature type="binding site" evidence="2">
    <location>
        <position position="13"/>
    </location>
    <ligand>
        <name>Zn(2+)</name>
        <dbReference type="ChEBI" id="CHEBI:29105"/>
    </ligand>
</feature>
<feature type="binding site" evidence="2">
    <location>
        <position position="16"/>
    </location>
    <ligand>
        <name>Zn(2+)</name>
        <dbReference type="ChEBI" id="CHEBI:29105"/>
    </ligand>
</feature>
<feature type="binding site" evidence="2">
    <location>
        <position position="29"/>
    </location>
    <ligand>
        <name>Zn(2+)</name>
        <dbReference type="ChEBI" id="CHEBI:29105"/>
    </ligand>
</feature>
<feature type="binding site" evidence="2">
    <location>
        <position position="32"/>
    </location>
    <ligand>
        <name>Zn(2+)</name>
        <dbReference type="ChEBI" id="CHEBI:29105"/>
    </ligand>
</feature>
<accession>Q6DIP3</accession>
<comment type="function">
    <text evidence="1 2">E3 ubiquitin-protein ligase that mediates ubiquitination oF target proteins. Depending on the associated E2 ligase, mediates 'Lys-27'-, 'Lys-29'-, 'Lys-48'- and/or 'Lys-63'-linked polyubiquitination of substrates. Part of a BAG6-dependent quality control process ensuring that proteins of the secretory pathway that are mislocalized to the cytosol are degraded by the proteasome. Probably acts by providing the ubiquitin ligase activity associated with the BAG6 complex and be responsible for ubiquitination of the hydrophobic mislocalized proteins and their targeting to the proteasome.</text>
</comment>
<comment type="catalytic activity">
    <reaction evidence="2">
        <text>S-ubiquitinyl-[E2 ubiquitin-conjugating enzyme]-L-cysteine + [acceptor protein]-L-lysine = [E2 ubiquitin-conjugating enzyme]-L-cysteine + N(6)-ubiquitinyl-[acceptor protein]-L-lysine.</text>
        <dbReference type="EC" id="2.3.2.27"/>
    </reaction>
</comment>
<comment type="pathway">
    <text evidence="2">Protein modification; protein ubiquitination.</text>
</comment>
<comment type="subcellular location">
    <subcellularLocation>
        <location evidence="2">Cytoplasm</location>
    </subcellularLocation>
    <subcellularLocation>
        <location evidence="2">Nucleus</location>
    </subcellularLocation>
</comment>
<evidence type="ECO:0000250" key="1">
    <source>
        <dbReference type="UniProtKB" id="Q91YL2"/>
    </source>
</evidence>
<evidence type="ECO:0000250" key="2">
    <source>
        <dbReference type="UniProtKB" id="Q9BV68"/>
    </source>
</evidence>
<evidence type="ECO:0000255" key="3">
    <source>
        <dbReference type="PROSITE-ProRule" id="PRU00175"/>
    </source>
</evidence>
<evidence type="ECO:0000256" key="4">
    <source>
        <dbReference type="SAM" id="MobiDB-lite"/>
    </source>
</evidence>
<evidence type="ECO:0000305" key="5"/>